<feature type="chain" id="PRO_0000204303" description="Hemocyanin, beta-C chain unit G">
    <location>
        <begin position="1" status="less than"/>
        <end position="404" status="greater than"/>
    </location>
</feature>
<feature type="binding site" evidence="1">
    <location>
        <position position="50"/>
    </location>
    <ligand>
        <name>Cu cation</name>
        <dbReference type="ChEBI" id="CHEBI:23378"/>
        <label>A</label>
    </ligand>
</feature>
<feature type="binding site" evidence="1">
    <location>
        <position position="61"/>
    </location>
    <ligand>
        <name>Cu cation</name>
        <dbReference type="ChEBI" id="CHEBI:23378"/>
        <label>A</label>
    </ligand>
</feature>
<feature type="binding site" evidence="1">
    <location>
        <position position="77"/>
    </location>
    <ligand>
        <name>Cu cation</name>
        <dbReference type="ChEBI" id="CHEBI:23378"/>
        <label>A</label>
    </ligand>
</feature>
<feature type="binding site" evidence="1">
    <location>
        <position position="176"/>
    </location>
    <ligand>
        <name>Cu cation</name>
        <dbReference type="ChEBI" id="CHEBI:23378"/>
        <label>B</label>
    </ligand>
</feature>
<feature type="binding site" evidence="1">
    <location>
        <position position="180"/>
    </location>
    <ligand>
        <name>Cu cation</name>
        <dbReference type="ChEBI" id="CHEBI:23378"/>
        <label>B</label>
    </ligand>
</feature>
<feature type="binding site" evidence="1">
    <location>
        <position position="207"/>
    </location>
    <ligand>
        <name>Cu cation</name>
        <dbReference type="ChEBI" id="CHEBI:23378"/>
        <label>B</label>
    </ligand>
</feature>
<feature type="glycosylation site" description="N-linked (GlcNAc...) asparagine" evidence="2">
    <location>
        <position position="38"/>
    </location>
</feature>
<feature type="glycosylation site" description="N-linked (GlcNAc...) asparagine">
    <location>
        <position position="60"/>
    </location>
</feature>
<feature type="glycosylation site" description="N-linked (GlcNAc...) asparagine" evidence="2">
    <location>
        <position position="378"/>
    </location>
</feature>
<feature type="disulfide bond">
    <location>
        <begin position="56"/>
        <end position="65"/>
    </location>
</feature>
<feature type="disulfide bond">
    <location>
        <begin position="166"/>
        <end position="233"/>
    </location>
</feature>
<feature type="disulfide bond">
    <location>
        <begin position="320"/>
        <end position="326"/>
    </location>
</feature>
<feature type="cross-link" description="2'-(S-cysteinyl)-histidine (Cys-His)" evidence="3">
    <location>
        <begin position="66"/>
        <end position="68"/>
    </location>
</feature>
<feature type="non-terminal residue">
    <location>
        <position position="1"/>
    </location>
</feature>
<feature type="non-terminal residue">
    <location>
        <position position="404"/>
    </location>
</feature>
<organism>
    <name type="scientific">Helix pomatia</name>
    <name type="common">Roman snail</name>
    <name type="synonym">Edible snail</name>
    <dbReference type="NCBI Taxonomy" id="6536"/>
    <lineage>
        <taxon>Eukaryota</taxon>
        <taxon>Metazoa</taxon>
        <taxon>Spiralia</taxon>
        <taxon>Lophotrochozoa</taxon>
        <taxon>Mollusca</taxon>
        <taxon>Gastropoda</taxon>
        <taxon>Heterobranchia</taxon>
        <taxon>Euthyneura</taxon>
        <taxon>Panpulmonata</taxon>
        <taxon>Eupulmonata</taxon>
        <taxon>Stylommatophora</taxon>
        <taxon>Helicina</taxon>
        <taxon>Helicoidea</taxon>
        <taxon>Helicidae</taxon>
        <taxon>Helix</taxon>
    </lineage>
</organism>
<proteinExistence type="evidence at protein level"/>
<sequence>DIHTTAVAGVGVRKDVTRLTVSETENLREALRRIKADNGSDGFQSIASFHGSPPGCEHENHSVACCIHGMANFPQWHRLYVKQWEDALTAQGAKIGIPYWDWTTAFTELPALVTEEVDNPFHHGTIYNGEITTRAPRDKLFNDPEFGKESFFYRQVLLALEQTDYCDFEVQYEISHNAIHSWTGGQSPYGMSTLEYTAYDPLFLLHHSNVDRQFAIWQALQKFRGLPYNSANCAIQLLHQPMRPFSDADNVNPVTRTNSRARDVFNYDRLNYQYDDLNFHGLSISELNDVLERRKEKARIFAEFLLHGIGASADVTFDLCDSHDHCEFAGTFAILGGPLEHPWAFDRLFKYDVTDVFSKLHLRPDSEYHFNIHIVSVNGTELDSHLIRSPTVQFVPGVKDYYEK</sequence>
<protein>
    <recommendedName>
        <fullName>Hemocyanin, beta-C chain unit G</fullName>
    </recommendedName>
</protein>
<dbReference type="SMR" id="P56823"/>
<dbReference type="GO" id="GO:0046872">
    <property type="term" value="F:metal ion binding"/>
    <property type="evidence" value="ECO:0007669"/>
    <property type="project" value="UniProtKB-KW"/>
</dbReference>
<dbReference type="GO" id="GO:0016491">
    <property type="term" value="F:oxidoreductase activity"/>
    <property type="evidence" value="ECO:0007669"/>
    <property type="project" value="InterPro"/>
</dbReference>
<dbReference type="GO" id="GO:0005344">
    <property type="term" value="F:oxygen carrier activity"/>
    <property type="evidence" value="ECO:0007669"/>
    <property type="project" value="UniProtKB-KW"/>
</dbReference>
<dbReference type="Gene3D" id="1.10.1280.10">
    <property type="entry name" value="Di-copper center containing domain from catechol oxidase"/>
    <property type="match status" value="1"/>
</dbReference>
<dbReference type="Gene3D" id="2.60.310.10">
    <property type="entry name" value="Haemocyanin C-terminal domain"/>
    <property type="match status" value="1"/>
</dbReference>
<dbReference type="InterPro" id="IPR008922">
    <property type="entry name" value="Di-copper_centre_dom_sf"/>
</dbReference>
<dbReference type="InterPro" id="IPR028999">
    <property type="entry name" value="Haemocyanin_beta-sandwich"/>
</dbReference>
<dbReference type="InterPro" id="IPR036848">
    <property type="entry name" value="Haemocyanin_C_sf"/>
</dbReference>
<dbReference type="InterPro" id="IPR050316">
    <property type="entry name" value="Tyrosinase/Hemocyanin"/>
</dbReference>
<dbReference type="InterPro" id="IPR002227">
    <property type="entry name" value="Tyrosinase_Cu-bd"/>
</dbReference>
<dbReference type="PANTHER" id="PTHR11474:SF76">
    <property type="entry name" value="SHKT DOMAIN-CONTAINING PROTEIN"/>
    <property type="match status" value="1"/>
</dbReference>
<dbReference type="PANTHER" id="PTHR11474">
    <property type="entry name" value="TYROSINASE FAMILY MEMBER"/>
    <property type="match status" value="1"/>
</dbReference>
<dbReference type="Pfam" id="PF14830">
    <property type="entry name" value="Haemocyan_bet_s"/>
    <property type="match status" value="1"/>
</dbReference>
<dbReference type="Pfam" id="PF00264">
    <property type="entry name" value="Tyrosinase"/>
    <property type="match status" value="1"/>
</dbReference>
<dbReference type="PRINTS" id="PR00092">
    <property type="entry name" value="TYROSINASE"/>
</dbReference>
<dbReference type="SUPFAM" id="SSF81277">
    <property type="entry name" value="C-terminal domain of mollusc hemocyanin"/>
    <property type="match status" value="1"/>
</dbReference>
<dbReference type="SUPFAM" id="SSF48056">
    <property type="entry name" value="Di-copper centre-containing domain"/>
    <property type="match status" value="1"/>
</dbReference>
<dbReference type="PROSITE" id="PS00497">
    <property type="entry name" value="TYROSINASE_1"/>
    <property type="match status" value="1"/>
</dbReference>
<dbReference type="PROSITE" id="PS00498">
    <property type="entry name" value="TYROSINASE_2"/>
    <property type="match status" value="1"/>
</dbReference>
<comment type="function">
    <text>Hemocyanins are copper-containing oxygen carriers occurring freely dissolved in the hemolymph of many mollusks and arthropods.</text>
</comment>
<comment type="cofactor">
    <cofactor>
        <name>Cu(2+)</name>
        <dbReference type="ChEBI" id="CHEBI:29036"/>
    </cofactor>
    <text>Binds 2 copper ions per heterodimer.</text>
</comment>
<comment type="subunit">
    <text>Decamers of large identical subunits (450 kDa), each containing 8 globular oxygen-binding functional units.</text>
</comment>
<comment type="similarity">
    <text evidence="4">Belongs to the tyrosinase family. Hemocyanin subfamily.</text>
</comment>
<keyword id="KW-0186">Copper</keyword>
<keyword id="KW-0903">Direct protein sequencing</keyword>
<keyword id="KW-1015">Disulfide bond</keyword>
<keyword id="KW-0325">Glycoprotein</keyword>
<keyword id="KW-0479">Metal-binding</keyword>
<keyword id="KW-0561">Oxygen transport</keyword>
<keyword id="KW-0677">Repeat</keyword>
<keyword id="KW-0883">Thioether bond</keyword>
<keyword id="KW-0813">Transport</keyword>
<name>HCYG_HELPO</name>
<reference key="1">
    <citation type="journal article" date="1989" name="Arch. Int. Physiol. Biochim.">
        <title>Amino-acid sequence of the N-terminal part of the functional unit g of beta-c-haemocyanin of the mollusc Helix pomatia.</title>
        <authorList>
            <person name="Xin X.-Q."/>
            <person name="Vanhoegaerden R."/>
            <person name="Gielens C."/>
            <person name="Witters R."/>
            <person name="van Beeumen J."/>
            <person name="Preaux G."/>
        </authorList>
    </citation>
    <scope>PROTEIN SEQUENCE OF 1-139</scope>
</reference>
<reference key="2">
    <citation type="book" date="1990" name="Invertebrate Dioxygen Carriers">
        <title>Amino-acid sequence of functional unit g from the beta-c-haemocyanin of Helix pomatia.</title>
        <editorList>
            <person name="Preaux G."/>
            <person name="Lontie R."/>
        </editorList>
        <authorList>
            <person name="Xin X.-Q."/>
            <person name="Gielens C."/>
            <person name="Witters R."/>
            <person name="Preaux G."/>
        </authorList>
    </citation>
    <scope>PROTEIN SEQUENCE OF 140-404</scope>
</reference>
<reference key="3">
    <citation type="journal article" date="1997" name="Eur. J. Biochem.">
        <title>Evidence for a cysteine-histidine thioether bridge in functional units of molluscan haemocyanins and location of the disulfide bridges in functional units d and g of the beta-c-haemocyanin of Helix pomatia.</title>
        <authorList>
            <person name="Gielens C."/>
            <person name="de Geest N."/>
            <person name="Xin X.-Q."/>
            <person name="Devreese B."/>
            <person name="van Beeumen J."/>
            <person name="Preaux G."/>
        </authorList>
    </citation>
    <scope>PARTIAL PROTEIN SEQUENCE</scope>
    <scope>SEQUENCE REVISION</scope>
    <scope>THIOETHER BOND</scope>
    <scope>IDENTIFICATION BY MASS SPECTROMETRY</scope>
</reference>
<evidence type="ECO:0000250" key="1"/>
<evidence type="ECO:0000255" key="2"/>
<evidence type="ECO:0000269" key="3">
    <source>
    </source>
</evidence>
<evidence type="ECO:0000305" key="4"/>
<accession>P56823</accession>